<name>RRAAH_VIBCH</name>
<accession>Q9KPK1</accession>
<dbReference type="EC" id="4.1.3.17"/>
<dbReference type="EC" id="4.1.1.112"/>
<dbReference type="EMBL" id="AE003852">
    <property type="protein sequence ID" value="AAF95509.1"/>
    <property type="status" value="ALT_INIT"/>
    <property type="molecule type" value="Genomic_DNA"/>
</dbReference>
<dbReference type="PIR" id="F82084">
    <property type="entry name" value="F82084"/>
</dbReference>
<dbReference type="RefSeq" id="NP_231996.1">
    <property type="nucleotide sequence ID" value="NC_002505.1"/>
</dbReference>
<dbReference type="RefSeq" id="WP_001204903.1">
    <property type="nucleotide sequence ID" value="NZ_LT906614.1"/>
</dbReference>
<dbReference type="PDB" id="1VI4">
    <property type="method" value="X-ray"/>
    <property type="resolution" value="1.87 A"/>
    <property type="chains" value="A=1-161"/>
</dbReference>
<dbReference type="PDBsum" id="1VI4"/>
<dbReference type="SMR" id="Q9KPK1"/>
<dbReference type="STRING" id="243277.VC_2366"/>
<dbReference type="DNASU" id="2613035"/>
<dbReference type="EnsemblBacteria" id="AAF95509">
    <property type="protein sequence ID" value="AAF95509"/>
    <property type="gene ID" value="VC_2366"/>
</dbReference>
<dbReference type="KEGG" id="vch:VC_2366"/>
<dbReference type="PATRIC" id="fig|243277.26.peg.2253"/>
<dbReference type="eggNOG" id="COG0684">
    <property type="taxonomic scope" value="Bacteria"/>
</dbReference>
<dbReference type="HOGENOM" id="CLU_072626_4_0_6"/>
<dbReference type="EvolutionaryTrace" id="Q9KPK1"/>
<dbReference type="Proteomes" id="UP000000584">
    <property type="component" value="Chromosome 1"/>
</dbReference>
<dbReference type="GO" id="GO:0047443">
    <property type="term" value="F:4-hydroxy-4-methyl-2-oxoglutarate aldolase activity"/>
    <property type="evidence" value="ECO:0007669"/>
    <property type="project" value="UniProtKB-EC"/>
</dbReference>
<dbReference type="GO" id="GO:0046872">
    <property type="term" value="F:metal ion binding"/>
    <property type="evidence" value="ECO:0007669"/>
    <property type="project" value="UniProtKB-KW"/>
</dbReference>
<dbReference type="GO" id="GO:0008948">
    <property type="term" value="F:oxaloacetate decarboxylase activity"/>
    <property type="evidence" value="ECO:0007669"/>
    <property type="project" value="UniProtKB-EC"/>
</dbReference>
<dbReference type="GO" id="GO:0008428">
    <property type="term" value="F:ribonuclease inhibitor activity"/>
    <property type="evidence" value="ECO:0007669"/>
    <property type="project" value="InterPro"/>
</dbReference>
<dbReference type="GO" id="GO:0051252">
    <property type="term" value="P:regulation of RNA metabolic process"/>
    <property type="evidence" value="ECO:0007669"/>
    <property type="project" value="InterPro"/>
</dbReference>
<dbReference type="CDD" id="cd16841">
    <property type="entry name" value="RraA_family"/>
    <property type="match status" value="1"/>
</dbReference>
<dbReference type="Gene3D" id="3.50.30.40">
    <property type="entry name" value="Ribonuclease E inhibitor RraA/RraA-like"/>
    <property type="match status" value="1"/>
</dbReference>
<dbReference type="InterPro" id="IPR010203">
    <property type="entry name" value="RraA"/>
</dbReference>
<dbReference type="InterPro" id="IPR005493">
    <property type="entry name" value="RraA/RraA-like"/>
</dbReference>
<dbReference type="InterPro" id="IPR036704">
    <property type="entry name" value="RraA/RraA-like_sf"/>
</dbReference>
<dbReference type="NCBIfam" id="TIGR01935">
    <property type="entry name" value="NOT-MenG"/>
    <property type="match status" value="1"/>
</dbReference>
<dbReference type="NCBIfam" id="NF006875">
    <property type="entry name" value="PRK09372.1"/>
    <property type="match status" value="1"/>
</dbReference>
<dbReference type="NCBIfam" id="NF009134">
    <property type="entry name" value="PRK12487.1"/>
    <property type="match status" value="1"/>
</dbReference>
<dbReference type="PANTHER" id="PTHR33254">
    <property type="entry name" value="4-HYDROXY-4-METHYL-2-OXOGLUTARATE ALDOLASE 3-RELATED"/>
    <property type="match status" value="1"/>
</dbReference>
<dbReference type="PANTHER" id="PTHR33254:SF4">
    <property type="entry name" value="4-HYDROXY-4-METHYL-2-OXOGLUTARATE ALDOLASE 3-RELATED"/>
    <property type="match status" value="1"/>
</dbReference>
<dbReference type="Pfam" id="PF03737">
    <property type="entry name" value="RraA-like"/>
    <property type="match status" value="1"/>
</dbReference>
<dbReference type="SUPFAM" id="SSF89562">
    <property type="entry name" value="RraA-like"/>
    <property type="match status" value="1"/>
</dbReference>
<gene>
    <name type="ordered locus">VC_2366</name>
</gene>
<sequence length="161" mass="17717">MRDITPDLCDKYESQVTLLNLPLQNFGQRSAFWGEIVTVRCYHDNSKVRDVLSQNGKGKVLVVDGHGSCHKALMGDQLAILAIKNDWEGVIIYGAVRDVVAMSEMDLGIKALGTSPFKTEKRGAGQVNVTLTMQNQIVEPGDYLYADWNGILMSETALDVA</sequence>
<proteinExistence type="evidence at protein level"/>
<feature type="chain" id="PRO_0000209640" description="Putative 4-hydroxy-4-methyl-2-oxoglutarate aldolase">
    <location>
        <begin position="1"/>
        <end position="161"/>
    </location>
</feature>
<feature type="binding site" evidence="1">
    <location>
        <begin position="75"/>
        <end position="78"/>
    </location>
    <ligand>
        <name>substrate</name>
    </ligand>
</feature>
<feature type="binding site" evidence="1">
    <location>
        <position position="97"/>
    </location>
    <ligand>
        <name>substrate</name>
    </ligand>
</feature>
<feature type="binding site" evidence="1">
    <location>
        <position position="98"/>
    </location>
    <ligand>
        <name>a divalent metal cation</name>
        <dbReference type="ChEBI" id="CHEBI:60240"/>
    </ligand>
</feature>
<feature type="helix" evidence="3">
    <location>
        <begin position="5"/>
        <end position="11"/>
    </location>
</feature>
<feature type="helix" evidence="3">
    <location>
        <begin position="13"/>
        <end position="15"/>
    </location>
</feature>
<feature type="strand" evidence="3">
    <location>
        <begin position="32"/>
        <end position="40"/>
    </location>
</feature>
<feature type="helix" evidence="3">
    <location>
        <begin position="46"/>
        <end position="52"/>
    </location>
</feature>
<feature type="strand" evidence="3">
    <location>
        <begin position="59"/>
        <end position="64"/>
    </location>
</feature>
<feature type="strand" evidence="3">
    <location>
        <begin position="70"/>
        <end position="74"/>
    </location>
</feature>
<feature type="helix" evidence="3">
    <location>
        <begin position="76"/>
        <end position="84"/>
    </location>
</feature>
<feature type="strand" evidence="3">
    <location>
        <begin position="89"/>
        <end position="96"/>
    </location>
</feature>
<feature type="helix" evidence="3">
    <location>
        <begin position="99"/>
        <end position="102"/>
    </location>
</feature>
<feature type="strand" evidence="3">
    <location>
        <begin position="105"/>
        <end position="114"/>
    </location>
</feature>
<feature type="strand" evidence="3">
    <location>
        <begin position="126"/>
        <end position="128"/>
    </location>
</feature>
<feature type="strand" evidence="3">
    <location>
        <begin position="131"/>
        <end position="133"/>
    </location>
</feature>
<feature type="strand" evidence="3">
    <location>
        <begin position="136"/>
        <end position="138"/>
    </location>
</feature>
<feature type="strand" evidence="3">
    <location>
        <begin position="142"/>
        <end position="147"/>
    </location>
</feature>
<feature type="strand" evidence="3">
    <location>
        <begin position="150"/>
        <end position="156"/>
    </location>
</feature>
<evidence type="ECO:0000250" key="1"/>
<evidence type="ECO:0000305" key="2"/>
<evidence type="ECO:0007829" key="3">
    <source>
        <dbReference type="PDB" id="1VI4"/>
    </source>
</evidence>
<organism>
    <name type="scientific">Vibrio cholerae serotype O1 (strain ATCC 39315 / El Tor Inaba N16961)</name>
    <dbReference type="NCBI Taxonomy" id="243277"/>
    <lineage>
        <taxon>Bacteria</taxon>
        <taxon>Pseudomonadati</taxon>
        <taxon>Pseudomonadota</taxon>
        <taxon>Gammaproteobacteria</taxon>
        <taxon>Vibrionales</taxon>
        <taxon>Vibrionaceae</taxon>
        <taxon>Vibrio</taxon>
    </lineage>
</organism>
<comment type="function">
    <text evidence="1">Catalyzes the aldol cleavage of 4-hydroxy-4-methyl-2-oxoglutarate (HMG) into 2 molecules of pyruvate. Also contains a secondary oxaloacetate (OAA) decarboxylase activity due to the common pyruvate enolate transition state formed following C-C bond cleavage in the retro-aldol and decarboxylation reactions (By similarity).</text>
</comment>
<comment type="catalytic activity">
    <reaction>
        <text>4-hydroxy-4-methyl-2-oxoglutarate = 2 pyruvate</text>
        <dbReference type="Rhea" id="RHEA:22748"/>
        <dbReference type="ChEBI" id="CHEBI:15361"/>
        <dbReference type="ChEBI" id="CHEBI:58276"/>
        <dbReference type="EC" id="4.1.3.17"/>
    </reaction>
</comment>
<comment type="catalytic activity">
    <reaction>
        <text>oxaloacetate + H(+) = pyruvate + CO2</text>
        <dbReference type="Rhea" id="RHEA:15641"/>
        <dbReference type="ChEBI" id="CHEBI:15361"/>
        <dbReference type="ChEBI" id="CHEBI:15378"/>
        <dbReference type="ChEBI" id="CHEBI:16452"/>
        <dbReference type="ChEBI" id="CHEBI:16526"/>
        <dbReference type="EC" id="4.1.1.112"/>
    </reaction>
</comment>
<comment type="cofactor">
    <cofactor evidence="1">
        <name>a divalent metal cation</name>
        <dbReference type="ChEBI" id="CHEBI:60240"/>
    </cofactor>
    <text evidence="1">Divalent metal cation.</text>
</comment>
<comment type="subunit">
    <text evidence="1">Homotrimer.</text>
</comment>
<comment type="similarity">
    <text evidence="2">Belongs to the class II aldolase/RraA-like family.</text>
</comment>
<comment type="sequence caution" evidence="2">
    <conflict type="erroneous initiation">
        <sequence resource="EMBL-CDS" id="AAF95509"/>
    </conflict>
</comment>
<protein>
    <recommendedName>
        <fullName>Putative 4-hydroxy-4-methyl-2-oxoglutarate aldolase</fullName>
        <shortName>HMG aldolase</shortName>
        <ecNumber>4.1.3.17</ecNumber>
    </recommendedName>
    <alternativeName>
        <fullName>Oxaloacetate decarboxylase</fullName>
        <shortName>OAA decarboxylase</shortName>
        <ecNumber>4.1.1.112</ecNumber>
    </alternativeName>
    <alternativeName>
        <fullName>Regulator of ribonuclease activity homolog</fullName>
    </alternativeName>
    <alternativeName>
        <fullName>RraA-like protein</fullName>
    </alternativeName>
</protein>
<keyword id="KW-0002">3D-structure</keyword>
<keyword id="KW-0456">Lyase</keyword>
<keyword id="KW-0479">Metal-binding</keyword>
<keyword id="KW-1185">Reference proteome</keyword>
<reference key="1">
    <citation type="journal article" date="2000" name="Nature">
        <title>DNA sequence of both chromosomes of the cholera pathogen Vibrio cholerae.</title>
        <authorList>
            <person name="Heidelberg J.F."/>
            <person name="Eisen J.A."/>
            <person name="Nelson W.C."/>
            <person name="Clayton R.A."/>
            <person name="Gwinn M.L."/>
            <person name="Dodson R.J."/>
            <person name="Haft D.H."/>
            <person name="Hickey E.K."/>
            <person name="Peterson J.D."/>
            <person name="Umayam L.A."/>
            <person name="Gill S.R."/>
            <person name="Nelson K.E."/>
            <person name="Read T.D."/>
            <person name="Tettelin H."/>
            <person name="Richardson D.L."/>
            <person name="Ermolaeva M.D."/>
            <person name="Vamathevan J.J."/>
            <person name="Bass S."/>
            <person name="Qin H."/>
            <person name="Dragoi I."/>
            <person name="Sellers P."/>
            <person name="McDonald L.A."/>
            <person name="Utterback T.R."/>
            <person name="Fleischmann R.D."/>
            <person name="Nierman W.C."/>
            <person name="White O."/>
            <person name="Salzberg S.L."/>
            <person name="Smith H.O."/>
            <person name="Colwell R.R."/>
            <person name="Mekalanos J.J."/>
            <person name="Venter J.C."/>
            <person name="Fraser C.M."/>
        </authorList>
    </citation>
    <scope>NUCLEOTIDE SEQUENCE [LARGE SCALE GENOMIC DNA]</scope>
    <source>
        <strain>ATCC 39315 / El Tor Inaba N16961</strain>
    </source>
</reference>